<reference key="1">
    <citation type="journal article" date="1998" name="Science">
        <title>Genome sequence of the nematode C. elegans: a platform for investigating biology.</title>
        <authorList>
            <consortium name="The C. elegans sequencing consortium"/>
        </authorList>
    </citation>
    <scope>NUCLEOTIDE SEQUENCE [LARGE SCALE GENOMIC DNA]</scope>
    <source>
        <strain>Bristol N2</strain>
    </source>
</reference>
<proteinExistence type="predicted"/>
<name>YT72_CAEEL</name>
<sequence length="204" mass="24063">MDDKELFPKVDILNLTFSPKSEISEDVFKQMFSSLDRLWWSRLVISIRGYVINYVQQNDEVLFSCDDAFIKIHQKLAERNSQFEDAFEYLTAIFHVIREKNTLIQMISNPKSISTTKISPNLDRSFNIIHGNLTPKTIQLTIAQLPAYTMFIKVVVNLQQRWENEKLKKKSIRFETDPEWEPDERVVLFQTFASGMTSRIRYDK</sequence>
<keyword id="KW-1185">Reference proteome</keyword>
<accession>Q11086</accession>
<feature type="chain" id="PRO_0000065096" description="Uncharacterized protein C01C10.2">
    <location>
        <begin position="1"/>
        <end position="204"/>
    </location>
</feature>
<protein>
    <recommendedName>
        <fullName>Uncharacterized protein C01C10.2</fullName>
    </recommendedName>
</protein>
<dbReference type="EMBL" id="FO080255">
    <property type="protein sequence ID" value="CCD62383.1"/>
    <property type="molecule type" value="Genomic_DNA"/>
</dbReference>
<dbReference type="PIR" id="T15365">
    <property type="entry name" value="T15365"/>
</dbReference>
<dbReference type="RefSeq" id="NP_001024326.1">
    <property type="nucleotide sequence ID" value="NM_001029155.1"/>
</dbReference>
<dbReference type="RefSeq" id="NP_001359817.1">
    <property type="nucleotide sequence ID" value="NM_001373359.3"/>
</dbReference>
<dbReference type="BioGRID" id="46929">
    <property type="interactions" value="2"/>
</dbReference>
<dbReference type="FunCoup" id="Q11086">
    <property type="interactions" value="92"/>
</dbReference>
<dbReference type="STRING" id="6239.C01C10.2b.1"/>
<dbReference type="PaxDb" id="6239-C01C10.2b"/>
<dbReference type="PeptideAtlas" id="Q11086"/>
<dbReference type="EnsemblMetazoa" id="C01C10.2a.1">
    <property type="protein sequence ID" value="C01C10.2a.1"/>
    <property type="gene ID" value="WBGene00015294"/>
</dbReference>
<dbReference type="GeneID" id="182067"/>
<dbReference type="UCSC" id="C01C10.2b">
    <property type="organism name" value="c. elegans"/>
</dbReference>
<dbReference type="AGR" id="WB:WBGene00015294"/>
<dbReference type="WormBase" id="C01C10.2a">
    <property type="protein sequence ID" value="CE02448"/>
    <property type="gene ID" value="WBGene00015294"/>
</dbReference>
<dbReference type="eggNOG" id="ENOG502SQ1B">
    <property type="taxonomic scope" value="Eukaryota"/>
</dbReference>
<dbReference type="HOGENOM" id="CLU_1344336_0_0_1"/>
<dbReference type="InParanoid" id="Q11086"/>
<dbReference type="PRO" id="PR:Q11086"/>
<dbReference type="Proteomes" id="UP000001940">
    <property type="component" value="Chromosome X"/>
</dbReference>
<dbReference type="Bgee" id="WBGene00015294">
    <property type="expression patterns" value="Expressed in larva and 4 other cell types or tissues"/>
</dbReference>
<dbReference type="ExpressionAtlas" id="Q11086">
    <property type="expression patterns" value="baseline and differential"/>
</dbReference>
<gene>
    <name type="ORF">C01C10.2</name>
</gene>
<organism>
    <name type="scientific">Caenorhabditis elegans</name>
    <dbReference type="NCBI Taxonomy" id="6239"/>
    <lineage>
        <taxon>Eukaryota</taxon>
        <taxon>Metazoa</taxon>
        <taxon>Ecdysozoa</taxon>
        <taxon>Nematoda</taxon>
        <taxon>Chromadorea</taxon>
        <taxon>Rhabditida</taxon>
        <taxon>Rhabditina</taxon>
        <taxon>Rhabditomorpha</taxon>
        <taxon>Rhabditoidea</taxon>
        <taxon>Rhabditidae</taxon>
        <taxon>Peloderinae</taxon>
        <taxon>Caenorhabditis</taxon>
    </lineage>
</organism>